<protein>
    <recommendedName>
        <fullName evidence="1">Small ribosomal subunit protein bS20</fullName>
    </recommendedName>
    <alternativeName>
        <fullName evidence="2">30S ribosomal protein S20</fullName>
    </alternativeName>
</protein>
<accession>Q6G0V7</accession>
<feature type="chain" id="PRO_0000167923" description="Small ribosomal subunit protein bS20">
    <location>
        <begin position="1"/>
        <end position="88"/>
    </location>
</feature>
<dbReference type="EMBL" id="BX897700">
    <property type="protein sequence ID" value="CAF25616.1"/>
    <property type="molecule type" value="Genomic_DNA"/>
</dbReference>
<dbReference type="RefSeq" id="WP_011178938.1">
    <property type="nucleotide sequence ID" value="NC_005955.1"/>
</dbReference>
<dbReference type="SMR" id="Q6G0V7"/>
<dbReference type="KEGG" id="bqu:BQ01100"/>
<dbReference type="eggNOG" id="COG0268">
    <property type="taxonomic scope" value="Bacteria"/>
</dbReference>
<dbReference type="HOGENOM" id="CLU_160655_3_0_5"/>
<dbReference type="OrthoDB" id="9807974at2"/>
<dbReference type="Proteomes" id="UP000000597">
    <property type="component" value="Chromosome"/>
</dbReference>
<dbReference type="GO" id="GO:0015935">
    <property type="term" value="C:small ribosomal subunit"/>
    <property type="evidence" value="ECO:0007669"/>
    <property type="project" value="TreeGrafter"/>
</dbReference>
<dbReference type="GO" id="GO:0070181">
    <property type="term" value="F:small ribosomal subunit rRNA binding"/>
    <property type="evidence" value="ECO:0007669"/>
    <property type="project" value="TreeGrafter"/>
</dbReference>
<dbReference type="GO" id="GO:0003735">
    <property type="term" value="F:structural constituent of ribosome"/>
    <property type="evidence" value="ECO:0007669"/>
    <property type="project" value="InterPro"/>
</dbReference>
<dbReference type="GO" id="GO:0006412">
    <property type="term" value="P:translation"/>
    <property type="evidence" value="ECO:0007669"/>
    <property type="project" value="UniProtKB-UniRule"/>
</dbReference>
<dbReference type="FunFam" id="1.20.58.110:FF:000001">
    <property type="entry name" value="30S ribosomal protein S20"/>
    <property type="match status" value="1"/>
</dbReference>
<dbReference type="Gene3D" id="1.20.58.110">
    <property type="entry name" value="Ribosomal protein S20"/>
    <property type="match status" value="1"/>
</dbReference>
<dbReference type="HAMAP" id="MF_00500">
    <property type="entry name" value="Ribosomal_bS20"/>
    <property type="match status" value="1"/>
</dbReference>
<dbReference type="InterPro" id="IPR002583">
    <property type="entry name" value="Ribosomal_bS20"/>
</dbReference>
<dbReference type="InterPro" id="IPR036510">
    <property type="entry name" value="Ribosomal_bS20_sf"/>
</dbReference>
<dbReference type="NCBIfam" id="TIGR00029">
    <property type="entry name" value="S20"/>
    <property type="match status" value="1"/>
</dbReference>
<dbReference type="PANTHER" id="PTHR33398">
    <property type="entry name" value="30S RIBOSOMAL PROTEIN S20"/>
    <property type="match status" value="1"/>
</dbReference>
<dbReference type="PANTHER" id="PTHR33398:SF1">
    <property type="entry name" value="SMALL RIBOSOMAL SUBUNIT PROTEIN BS20C"/>
    <property type="match status" value="1"/>
</dbReference>
<dbReference type="Pfam" id="PF01649">
    <property type="entry name" value="Ribosomal_S20p"/>
    <property type="match status" value="1"/>
</dbReference>
<dbReference type="SUPFAM" id="SSF46992">
    <property type="entry name" value="Ribosomal protein S20"/>
    <property type="match status" value="1"/>
</dbReference>
<name>RS20_BARQU</name>
<keyword id="KW-0687">Ribonucleoprotein</keyword>
<keyword id="KW-0689">Ribosomal protein</keyword>
<keyword id="KW-0694">RNA-binding</keyword>
<keyword id="KW-0699">rRNA-binding</keyword>
<sequence length="88" mass="9834">MANTPSAQKAVRKVAARTQINRARRSRVRAFMRKFYDALAGGDKVSAEVAFKNFEPEIMRAVSKGVFHKNTAARKVSRLAKRLKALSV</sequence>
<organism>
    <name type="scientific">Bartonella quintana (strain Toulouse)</name>
    <name type="common">Rochalimaea quintana</name>
    <dbReference type="NCBI Taxonomy" id="283165"/>
    <lineage>
        <taxon>Bacteria</taxon>
        <taxon>Pseudomonadati</taxon>
        <taxon>Pseudomonadota</taxon>
        <taxon>Alphaproteobacteria</taxon>
        <taxon>Hyphomicrobiales</taxon>
        <taxon>Bartonellaceae</taxon>
        <taxon>Bartonella</taxon>
    </lineage>
</organism>
<comment type="function">
    <text evidence="1">Binds directly to 16S ribosomal RNA.</text>
</comment>
<comment type="similarity">
    <text evidence="1">Belongs to the bacterial ribosomal protein bS20 family.</text>
</comment>
<proteinExistence type="inferred from homology"/>
<reference key="1">
    <citation type="journal article" date="2004" name="Proc. Natl. Acad. Sci. U.S.A.">
        <title>The louse-borne human pathogen Bartonella quintana is a genomic derivative of the zoonotic agent Bartonella henselae.</title>
        <authorList>
            <person name="Alsmark U.C.M."/>
            <person name="Frank A.C."/>
            <person name="Karlberg E.O."/>
            <person name="Legault B.-A."/>
            <person name="Ardell D.H."/>
            <person name="Canbaeck B."/>
            <person name="Eriksson A.-S."/>
            <person name="Naeslund A.K."/>
            <person name="Handley S.A."/>
            <person name="Huvet M."/>
            <person name="La Scola B."/>
            <person name="Holmberg M."/>
            <person name="Andersson S.G.E."/>
        </authorList>
    </citation>
    <scope>NUCLEOTIDE SEQUENCE [LARGE SCALE GENOMIC DNA]</scope>
    <source>
        <strain>Toulouse</strain>
    </source>
</reference>
<gene>
    <name evidence="1" type="primary">rpsT</name>
    <name type="ordered locus">BQ01100</name>
</gene>
<evidence type="ECO:0000255" key="1">
    <source>
        <dbReference type="HAMAP-Rule" id="MF_00500"/>
    </source>
</evidence>
<evidence type="ECO:0000305" key="2"/>